<proteinExistence type="evidence at transcript level"/>
<dbReference type="EMBL" id="Z23105">
    <property type="protein sequence ID" value="CAA80652.1"/>
    <property type="molecule type" value="mRNA"/>
</dbReference>
<dbReference type="PIR" id="S69891">
    <property type="entry name" value="S34348"/>
</dbReference>
<dbReference type="SMR" id="Q08706"/>
<dbReference type="GO" id="GO:0007165">
    <property type="term" value="P:signal transduction"/>
    <property type="evidence" value="ECO:0007669"/>
    <property type="project" value="UniProtKB-KW"/>
</dbReference>
<dbReference type="CDD" id="cd00200">
    <property type="entry name" value="WD40"/>
    <property type="match status" value="1"/>
</dbReference>
<dbReference type="FunFam" id="2.130.10.10:FF:000007">
    <property type="entry name" value="Guanine nucleotide-binding protein G(I)/G(S)/G(T) subunit beta-1"/>
    <property type="match status" value="1"/>
</dbReference>
<dbReference type="Gene3D" id="2.130.10.10">
    <property type="entry name" value="YVTN repeat-like/Quinoprotein amine dehydrogenase"/>
    <property type="match status" value="1"/>
</dbReference>
<dbReference type="InterPro" id="IPR020472">
    <property type="entry name" value="G-protein_beta_WD-40_rep"/>
</dbReference>
<dbReference type="InterPro" id="IPR001632">
    <property type="entry name" value="Gprotein_B"/>
</dbReference>
<dbReference type="InterPro" id="IPR016346">
    <property type="entry name" value="Guanine_nucleotide-bd_bsu"/>
</dbReference>
<dbReference type="InterPro" id="IPR015943">
    <property type="entry name" value="WD40/YVTN_repeat-like_dom_sf"/>
</dbReference>
<dbReference type="InterPro" id="IPR019775">
    <property type="entry name" value="WD40_repeat_CS"/>
</dbReference>
<dbReference type="InterPro" id="IPR036322">
    <property type="entry name" value="WD40_repeat_dom_sf"/>
</dbReference>
<dbReference type="InterPro" id="IPR001680">
    <property type="entry name" value="WD40_rpt"/>
</dbReference>
<dbReference type="PANTHER" id="PTHR19850">
    <property type="entry name" value="GUANINE NUCLEOTIDE-BINDING PROTEIN BETA G PROTEIN BETA"/>
    <property type="match status" value="1"/>
</dbReference>
<dbReference type="Pfam" id="PF25391">
    <property type="entry name" value="WD40_Gbeta"/>
    <property type="match status" value="1"/>
</dbReference>
<dbReference type="PIRSF" id="PIRSF002394">
    <property type="entry name" value="GN-bd_beta"/>
    <property type="match status" value="1"/>
</dbReference>
<dbReference type="PRINTS" id="PR00319">
    <property type="entry name" value="GPROTEINB"/>
</dbReference>
<dbReference type="PRINTS" id="PR00320">
    <property type="entry name" value="GPROTEINBRPT"/>
</dbReference>
<dbReference type="SMART" id="SM00320">
    <property type="entry name" value="WD40"/>
    <property type="match status" value="7"/>
</dbReference>
<dbReference type="SUPFAM" id="SSF50978">
    <property type="entry name" value="WD40 repeat-like"/>
    <property type="match status" value="1"/>
</dbReference>
<dbReference type="PROSITE" id="PS00678">
    <property type="entry name" value="WD_REPEATS_1"/>
    <property type="match status" value="2"/>
</dbReference>
<dbReference type="PROSITE" id="PS50082">
    <property type="entry name" value="WD_REPEATS_2"/>
    <property type="match status" value="5"/>
</dbReference>
<dbReference type="PROSITE" id="PS50294">
    <property type="entry name" value="WD_REPEATS_REGION"/>
    <property type="match status" value="1"/>
</dbReference>
<name>GBB_LYMST</name>
<reference key="1">
    <citation type="journal article" date="1994" name="Biochim. Biophys. Acta">
        <title>A G-protein beta subunit that is expressed in the central nervous system of the mollusc Lymnaea stagnalis identified through cDNA cloning.</title>
        <authorList>
            <person name="Knol J.C."/>
            <person name="Roovers E."/>
            <person name="van Kesteren E.R."/>
            <person name="Planta R.J."/>
            <person name="Vreugdenhil R."/>
            <person name="van Heerikhuizen H."/>
        </authorList>
    </citation>
    <scope>NUCLEOTIDE SEQUENCE [MRNA]</scope>
    <source>
        <tissue>CNS</tissue>
    </source>
</reference>
<organism>
    <name type="scientific">Lymnaea stagnalis</name>
    <name type="common">Great pond snail</name>
    <name type="synonym">Helix stagnalis</name>
    <dbReference type="NCBI Taxonomy" id="6523"/>
    <lineage>
        <taxon>Eukaryota</taxon>
        <taxon>Metazoa</taxon>
        <taxon>Spiralia</taxon>
        <taxon>Lophotrochozoa</taxon>
        <taxon>Mollusca</taxon>
        <taxon>Gastropoda</taxon>
        <taxon>Heterobranchia</taxon>
        <taxon>Euthyneura</taxon>
        <taxon>Panpulmonata</taxon>
        <taxon>Hygrophila</taxon>
        <taxon>Lymnaeoidea</taxon>
        <taxon>Lymnaeidae</taxon>
        <taxon>Lymnaea</taxon>
    </lineage>
</organism>
<keyword id="KW-0677">Repeat</keyword>
<keyword id="KW-0807">Transducer</keyword>
<keyword id="KW-0853">WD repeat</keyword>
<comment type="function">
    <text>Guanine nucleotide-binding proteins (G proteins) are involved as a modulator or transducer in various transmembrane signaling systems. The beta and gamma chains are required for the GTPase activity, for replacement of GDP by GTP, and for G protein-effector interaction.</text>
</comment>
<comment type="subunit">
    <text>G proteins are composed of 3 units, alpha, beta and gamma.</text>
</comment>
<comment type="similarity">
    <text evidence="1">Belongs to the WD repeat G protein beta family.</text>
</comment>
<accession>Q08706</accession>
<protein>
    <recommendedName>
        <fullName>Guanine nucleotide-binding protein subunit beta</fullName>
    </recommendedName>
</protein>
<feature type="chain" id="PRO_0000127718" description="Guanine nucleotide-binding protein subunit beta">
    <location>
        <begin position="1"/>
        <end position="341"/>
    </location>
</feature>
<feature type="repeat" description="WD 1">
    <location>
        <begin position="54"/>
        <end position="84"/>
    </location>
</feature>
<feature type="repeat" description="WD 2">
    <location>
        <begin position="96"/>
        <end position="126"/>
    </location>
</feature>
<feature type="repeat" description="WD 3">
    <location>
        <begin position="142"/>
        <end position="171"/>
    </location>
</feature>
<feature type="repeat" description="WD 4">
    <location>
        <begin position="183"/>
        <end position="213"/>
    </location>
</feature>
<feature type="repeat" description="WD 5">
    <location>
        <begin position="225"/>
        <end position="255"/>
    </location>
</feature>
<feature type="repeat" description="WD 6">
    <location>
        <begin position="269"/>
        <end position="299"/>
    </location>
</feature>
<feature type="repeat" description="WD 7">
    <location>
        <begin position="311"/>
        <end position="341"/>
    </location>
</feature>
<evidence type="ECO:0000305" key="1"/>
<sequence length="341" mass="37321">MSNDLEALRQETEQLKNQIREARKAAGDTTLAQACSGVEAVGRIQMRTRRTLRGHLAKIYAMHWASDSRNLVSASQDGKLIVWDGYTTNKVHAIPLRSSWVMTCAYAPSGNFVACGGLDNICSIYSLKTREGNVRVSRELPGHTGYLSCCRFIDDNSIVTSSGDMSCALWDIETGQQTTSFTGHTGDVMSLSTSPDFRTFVSGACDASAKLWDVRDGMCKQTFSGHESDINAITYFPNGHAFATGSDDATCRLFDIRADQEIGMYSHDNIICGITSVAFSKSGRLLLGRYDDFNCNVWDVLKQETHGVLAGHDNRVSCLGVTEDGSAVATGSWDSFLKIWN</sequence>